<accession>Q91Y86</accession>
<proteinExistence type="evidence at protein level"/>
<dbReference type="EC" id="2.7.11.24" evidence="7 8 11 12 22 23 24"/>
<dbReference type="EMBL" id="AB005663">
    <property type="protein sequence ID" value="BAA85875.1"/>
    <property type="molecule type" value="mRNA"/>
</dbReference>
<dbReference type="CCDS" id="CCDS36869.1"/>
<dbReference type="RefSeq" id="NP_057909.1">
    <property type="nucleotide sequence ID" value="NM_016700.5"/>
</dbReference>
<dbReference type="SMR" id="Q91Y86"/>
<dbReference type="BioGRID" id="204971">
    <property type="interactions" value="25"/>
</dbReference>
<dbReference type="CORUM" id="Q91Y86"/>
<dbReference type="DIP" id="DIP-31075N"/>
<dbReference type="ELM" id="Q91Y86"/>
<dbReference type="FunCoup" id="Q91Y86">
    <property type="interactions" value="2068"/>
</dbReference>
<dbReference type="IntAct" id="Q91Y86">
    <property type="interactions" value="8"/>
</dbReference>
<dbReference type="MINT" id="Q91Y86"/>
<dbReference type="BindingDB" id="Q91Y86"/>
<dbReference type="ChEMBL" id="CHEMBL1795174"/>
<dbReference type="iPTMnet" id="Q91Y86"/>
<dbReference type="PhosphoSitePlus" id="Q91Y86"/>
<dbReference type="jPOST" id="Q91Y86"/>
<dbReference type="PaxDb" id="10090-ENSMUSP00000107576"/>
<dbReference type="ProteomicsDB" id="295946"/>
<dbReference type="Pumba" id="Q91Y86"/>
<dbReference type="Antibodypedia" id="3846">
    <property type="antibodies" value="1678 antibodies from 48 providers"/>
</dbReference>
<dbReference type="DNASU" id="26419"/>
<dbReference type="Ensembl" id="ENSMUST00000111945.9">
    <property type="protein sequence ID" value="ENSMUSP00000107576.3"/>
    <property type="gene ID" value="ENSMUSG00000021936.15"/>
</dbReference>
<dbReference type="GeneID" id="26419"/>
<dbReference type="KEGG" id="mmu:26419"/>
<dbReference type="UCSC" id="uc007szt.3">
    <property type="organism name" value="mouse"/>
</dbReference>
<dbReference type="AGR" id="MGI:1346861"/>
<dbReference type="CTD" id="5599"/>
<dbReference type="MGI" id="MGI:1346861">
    <property type="gene designation" value="Mapk8"/>
</dbReference>
<dbReference type="VEuPathDB" id="HostDB:ENSMUSG00000021936"/>
<dbReference type="eggNOG" id="KOG0665">
    <property type="taxonomic scope" value="Eukaryota"/>
</dbReference>
<dbReference type="GeneTree" id="ENSGT00940000153692"/>
<dbReference type="InParanoid" id="Q91Y86"/>
<dbReference type="OrthoDB" id="192887at2759"/>
<dbReference type="PhylomeDB" id="Q91Y86"/>
<dbReference type="TreeFam" id="TF105100"/>
<dbReference type="BRENDA" id="2.7.11.24">
    <property type="organism ID" value="3474"/>
</dbReference>
<dbReference type="Reactome" id="R-MMU-111446">
    <property type="pathway name" value="Activation of BIM and translocation to mitochondria"/>
</dbReference>
<dbReference type="Reactome" id="R-MMU-139910">
    <property type="pathway name" value="Activation of BMF and translocation to mitochondria"/>
</dbReference>
<dbReference type="Reactome" id="R-MMU-193648">
    <property type="pathway name" value="NRAGE signals death through JNK"/>
</dbReference>
<dbReference type="Reactome" id="R-MMU-2559580">
    <property type="pathway name" value="Oxidative Stress Induced Senescence"/>
</dbReference>
<dbReference type="Reactome" id="R-MMU-2871796">
    <property type="pathway name" value="FCERI mediated MAPK activation"/>
</dbReference>
<dbReference type="Reactome" id="R-MMU-450321">
    <property type="pathway name" value="JNK (c-Jun kinases) phosphorylation and activation mediated by activated human TAK1"/>
</dbReference>
<dbReference type="Reactome" id="R-MMU-450341">
    <property type="pathway name" value="Activation of the AP-1 family of transcription factors"/>
</dbReference>
<dbReference type="Reactome" id="R-MMU-5693565">
    <property type="pathway name" value="Recruitment and ATM-mediated phosphorylation of repair and signaling proteins at DNA double strand breaks"/>
</dbReference>
<dbReference type="Reactome" id="R-MMU-9007892">
    <property type="pathway name" value="Interleukin-38 signaling"/>
</dbReference>
<dbReference type="BioGRID-ORCS" id="26419">
    <property type="hits" value="1 hit in 78 CRISPR screens"/>
</dbReference>
<dbReference type="ChiTaRS" id="Mapk8">
    <property type="organism name" value="mouse"/>
</dbReference>
<dbReference type="PRO" id="PR:Q91Y86"/>
<dbReference type="Proteomes" id="UP000000589">
    <property type="component" value="Chromosome 14"/>
</dbReference>
<dbReference type="RNAct" id="Q91Y86">
    <property type="molecule type" value="protein"/>
</dbReference>
<dbReference type="Bgee" id="ENSMUSG00000021936">
    <property type="expression patterns" value="Expressed in animal zygote and 270 other cell types or tissues"/>
</dbReference>
<dbReference type="ExpressionAtlas" id="Q91Y86">
    <property type="expression patterns" value="baseline and differential"/>
</dbReference>
<dbReference type="GO" id="GO:0030424">
    <property type="term" value="C:axon"/>
    <property type="evidence" value="ECO:0000315"/>
    <property type="project" value="ARUK-UCL"/>
</dbReference>
<dbReference type="GO" id="GO:0097441">
    <property type="term" value="C:basal dendrite"/>
    <property type="evidence" value="ECO:0000315"/>
    <property type="project" value="ARUK-UCL"/>
</dbReference>
<dbReference type="GO" id="GO:0005737">
    <property type="term" value="C:cytoplasm"/>
    <property type="evidence" value="ECO:0000314"/>
    <property type="project" value="UniProtKB"/>
</dbReference>
<dbReference type="GO" id="GO:0005829">
    <property type="term" value="C:cytosol"/>
    <property type="evidence" value="ECO:0000314"/>
    <property type="project" value="MGI"/>
</dbReference>
<dbReference type="GO" id="GO:0005739">
    <property type="term" value="C:mitochondrion"/>
    <property type="evidence" value="ECO:0000314"/>
    <property type="project" value="MGI"/>
</dbReference>
<dbReference type="GO" id="GO:0043005">
    <property type="term" value="C:neuron projection"/>
    <property type="evidence" value="ECO:0000314"/>
    <property type="project" value="MGI"/>
</dbReference>
<dbReference type="GO" id="GO:0005634">
    <property type="term" value="C:nucleus"/>
    <property type="evidence" value="ECO:0000314"/>
    <property type="project" value="MGI"/>
</dbReference>
<dbReference type="GO" id="GO:0002102">
    <property type="term" value="C:podosome"/>
    <property type="evidence" value="ECO:0000314"/>
    <property type="project" value="MGI"/>
</dbReference>
<dbReference type="GO" id="GO:0098685">
    <property type="term" value="C:Schaffer collateral - CA1 synapse"/>
    <property type="evidence" value="ECO:0000314"/>
    <property type="project" value="SynGO"/>
</dbReference>
<dbReference type="GO" id="GO:0045202">
    <property type="term" value="C:synapse"/>
    <property type="evidence" value="ECO:0000250"/>
    <property type="project" value="UniProtKB"/>
</dbReference>
<dbReference type="GO" id="GO:0005524">
    <property type="term" value="F:ATP binding"/>
    <property type="evidence" value="ECO:0007669"/>
    <property type="project" value="UniProtKB-KW"/>
</dbReference>
<dbReference type="GO" id="GO:0004705">
    <property type="term" value="F:JUN kinase activity"/>
    <property type="evidence" value="ECO:0000314"/>
    <property type="project" value="UniProtKB"/>
</dbReference>
<dbReference type="GO" id="GO:0016301">
    <property type="term" value="F:kinase activity"/>
    <property type="evidence" value="ECO:0000314"/>
    <property type="project" value="MGI"/>
</dbReference>
<dbReference type="GO" id="GO:0004672">
    <property type="term" value="F:protein kinase activity"/>
    <property type="evidence" value="ECO:0000314"/>
    <property type="project" value="MGI"/>
</dbReference>
<dbReference type="GO" id="GO:0106310">
    <property type="term" value="F:protein serine kinase activity"/>
    <property type="evidence" value="ECO:0007669"/>
    <property type="project" value="RHEA"/>
</dbReference>
<dbReference type="GO" id="GO:0004674">
    <property type="term" value="F:protein serine/threonine kinase activity"/>
    <property type="evidence" value="ECO:0000314"/>
    <property type="project" value="UniProtKB"/>
</dbReference>
<dbReference type="GO" id="GO:0004712">
    <property type="term" value="F:protein serine/threonine/tyrosine kinase activity"/>
    <property type="evidence" value="ECO:0000315"/>
    <property type="project" value="UniProtKB"/>
</dbReference>
<dbReference type="GO" id="GO:0097190">
    <property type="term" value="P:apoptotic signaling pathway"/>
    <property type="evidence" value="ECO:0000316"/>
    <property type="project" value="MGI"/>
</dbReference>
<dbReference type="GO" id="GO:0070301">
    <property type="term" value="P:cellular response to hydrogen peroxide"/>
    <property type="evidence" value="ECO:0000314"/>
    <property type="project" value="MGI"/>
</dbReference>
<dbReference type="GO" id="GO:0071222">
    <property type="term" value="P:cellular response to lipopolysaccharide"/>
    <property type="evidence" value="ECO:0000266"/>
    <property type="project" value="MGI"/>
</dbReference>
<dbReference type="GO" id="GO:0071732">
    <property type="term" value="P:cellular response to nitric oxide"/>
    <property type="evidence" value="ECO:0000315"/>
    <property type="project" value="MGI"/>
</dbReference>
<dbReference type="GO" id="GO:0048813">
    <property type="term" value="P:dendrite morphogenesis"/>
    <property type="evidence" value="ECO:0000315"/>
    <property type="project" value="CACAO"/>
</dbReference>
<dbReference type="GO" id="GO:0048263">
    <property type="term" value="P:determination of dorsal identity"/>
    <property type="evidence" value="ECO:0000266"/>
    <property type="project" value="MGI"/>
</dbReference>
<dbReference type="GO" id="GO:0097009">
    <property type="term" value="P:energy homeostasis"/>
    <property type="evidence" value="ECO:0000314"/>
    <property type="project" value="UniProtKB"/>
</dbReference>
<dbReference type="GO" id="GO:0007229">
    <property type="term" value="P:integrin-mediated signaling pathway"/>
    <property type="evidence" value="ECO:0000314"/>
    <property type="project" value="UniProt"/>
</dbReference>
<dbReference type="GO" id="GO:0007254">
    <property type="term" value="P:JNK cascade"/>
    <property type="evidence" value="ECO:0000314"/>
    <property type="project" value="UniProtKB"/>
</dbReference>
<dbReference type="GO" id="GO:0050804">
    <property type="term" value="P:modulation of chemical synaptic transmission"/>
    <property type="evidence" value="ECO:0000314"/>
    <property type="project" value="SynGO"/>
</dbReference>
<dbReference type="GO" id="GO:0043066">
    <property type="term" value="P:negative regulation of apoptotic process"/>
    <property type="evidence" value="ECO:0000266"/>
    <property type="project" value="MGI"/>
</dbReference>
<dbReference type="GO" id="GO:0001764">
    <property type="term" value="P:neuron migration"/>
    <property type="evidence" value="ECO:0000315"/>
    <property type="project" value="CACAO"/>
</dbReference>
<dbReference type="GO" id="GO:0097150">
    <property type="term" value="P:neuronal stem cell population maintenance"/>
    <property type="evidence" value="ECO:0000266"/>
    <property type="project" value="MGI"/>
</dbReference>
<dbReference type="GO" id="GO:0001503">
    <property type="term" value="P:ossification"/>
    <property type="evidence" value="ECO:0000315"/>
    <property type="project" value="MGI"/>
</dbReference>
<dbReference type="GO" id="GO:0018105">
    <property type="term" value="P:peptidyl-serine phosphorylation"/>
    <property type="evidence" value="ECO:0000250"/>
    <property type="project" value="UniProtKB"/>
</dbReference>
<dbReference type="GO" id="GO:2001235">
    <property type="term" value="P:positive regulation of apoptotic signaling pathway"/>
    <property type="evidence" value="ECO:0000316"/>
    <property type="project" value="MGI"/>
</dbReference>
<dbReference type="GO" id="GO:2000017">
    <property type="term" value="P:positive regulation of determination of dorsal identity"/>
    <property type="evidence" value="ECO:0000314"/>
    <property type="project" value="MGI"/>
</dbReference>
<dbReference type="GO" id="GO:1900227">
    <property type="term" value="P:positive regulation of NLRP3 inflammasome complex assembly"/>
    <property type="evidence" value="ECO:0000314"/>
    <property type="project" value="UniProtKB"/>
</dbReference>
<dbReference type="GO" id="GO:0071803">
    <property type="term" value="P:positive regulation of podosome assembly"/>
    <property type="evidence" value="ECO:0000315"/>
    <property type="project" value="MGI"/>
</dbReference>
<dbReference type="GO" id="GO:0032436">
    <property type="term" value="P:positive regulation of proteasomal ubiquitin-dependent protein catabolic process"/>
    <property type="evidence" value="ECO:0000315"/>
    <property type="project" value="UniProtKB"/>
</dbReference>
<dbReference type="GO" id="GO:0031398">
    <property type="term" value="P:positive regulation of protein ubiquitination"/>
    <property type="evidence" value="ECO:0000315"/>
    <property type="project" value="UniProtKB"/>
</dbReference>
<dbReference type="GO" id="GO:0097300">
    <property type="term" value="P:programmed necrotic cell death"/>
    <property type="evidence" value="ECO:0000315"/>
    <property type="project" value="MGI"/>
</dbReference>
<dbReference type="GO" id="GO:0061833">
    <property type="term" value="P:protein localization to tricellular tight junction"/>
    <property type="evidence" value="ECO:0000315"/>
    <property type="project" value="MGI"/>
</dbReference>
<dbReference type="GO" id="GO:0006468">
    <property type="term" value="P:protein phosphorylation"/>
    <property type="evidence" value="ECO:0000315"/>
    <property type="project" value="UniProtKB"/>
</dbReference>
<dbReference type="GO" id="GO:0042752">
    <property type="term" value="P:regulation of circadian rhythm"/>
    <property type="evidence" value="ECO:0000315"/>
    <property type="project" value="UniProtKB"/>
</dbReference>
<dbReference type="GO" id="GO:0010468">
    <property type="term" value="P:regulation of gene expression"/>
    <property type="evidence" value="ECO:0000315"/>
    <property type="project" value="MGI"/>
</dbReference>
<dbReference type="GO" id="GO:0046686">
    <property type="term" value="P:response to cadmium ion"/>
    <property type="evidence" value="ECO:0000316"/>
    <property type="project" value="MGI"/>
</dbReference>
<dbReference type="GO" id="GO:0009411">
    <property type="term" value="P:response to UV"/>
    <property type="evidence" value="ECO:0000266"/>
    <property type="project" value="MGI"/>
</dbReference>
<dbReference type="GO" id="GO:0048511">
    <property type="term" value="P:rhythmic process"/>
    <property type="evidence" value="ECO:0007669"/>
    <property type="project" value="UniProtKB-KW"/>
</dbReference>
<dbReference type="CDD" id="cd07850">
    <property type="entry name" value="STKc_JNK"/>
    <property type="match status" value="1"/>
</dbReference>
<dbReference type="FunFam" id="1.10.510.10:FF:000009">
    <property type="entry name" value="Mitogen-activated protein kinase"/>
    <property type="match status" value="1"/>
</dbReference>
<dbReference type="FunFam" id="3.30.200.20:FF:000210">
    <property type="entry name" value="Mitogen-activated protein kinase"/>
    <property type="match status" value="1"/>
</dbReference>
<dbReference type="Gene3D" id="3.30.200.20">
    <property type="entry name" value="Phosphorylase Kinase, domain 1"/>
    <property type="match status" value="1"/>
</dbReference>
<dbReference type="Gene3D" id="1.10.510.10">
    <property type="entry name" value="Transferase(Phosphotransferase) domain 1"/>
    <property type="match status" value="1"/>
</dbReference>
<dbReference type="InterPro" id="IPR011009">
    <property type="entry name" value="Kinase-like_dom_sf"/>
</dbReference>
<dbReference type="InterPro" id="IPR050117">
    <property type="entry name" value="MAP_kinase"/>
</dbReference>
<dbReference type="InterPro" id="IPR003527">
    <property type="entry name" value="MAP_kinase_CS"/>
</dbReference>
<dbReference type="InterPro" id="IPR008351">
    <property type="entry name" value="MAPK_JNK"/>
</dbReference>
<dbReference type="InterPro" id="IPR000719">
    <property type="entry name" value="Prot_kinase_dom"/>
</dbReference>
<dbReference type="InterPro" id="IPR008271">
    <property type="entry name" value="Ser/Thr_kinase_AS"/>
</dbReference>
<dbReference type="PANTHER" id="PTHR24055">
    <property type="entry name" value="MITOGEN-ACTIVATED PROTEIN KINASE"/>
    <property type="match status" value="1"/>
</dbReference>
<dbReference type="Pfam" id="PF00069">
    <property type="entry name" value="Pkinase"/>
    <property type="match status" value="1"/>
</dbReference>
<dbReference type="PRINTS" id="PR01772">
    <property type="entry name" value="JNKMAPKINASE"/>
</dbReference>
<dbReference type="SMART" id="SM00220">
    <property type="entry name" value="S_TKc"/>
    <property type="match status" value="1"/>
</dbReference>
<dbReference type="SUPFAM" id="SSF56112">
    <property type="entry name" value="Protein kinase-like (PK-like)"/>
    <property type="match status" value="1"/>
</dbReference>
<dbReference type="PROSITE" id="PS01351">
    <property type="entry name" value="MAPK"/>
    <property type="match status" value="1"/>
</dbReference>
<dbReference type="PROSITE" id="PS50011">
    <property type="entry name" value="PROTEIN_KINASE_DOM"/>
    <property type="match status" value="1"/>
</dbReference>
<dbReference type="PROSITE" id="PS00108">
    <property type="entry name" value="PROTEIN_KINASE_ST"/>
    <property type="match status" value="1"/>
</dbReference>
<gene>
    <name type="primary">Mapk8</name>
    <name evidence="25" type="synonym">Jnk1</name>
    <name type="synonym">Prkm8</name>
</gene>
<reference key="1">
    <citation type="journal article" date="1999" name="Mol. Cell. Biol.">
        <title>JSAP1, a novel jun N-terminal protein kinase (JNK)-binding protein that functions as a scaffold factor in the JNK signaling pathway.</title>
        <authorList>
            <person name="Ito M."/>
            <person name="Yoshioka K."/>
            <person name="Akechi M."/>
            <person name="Yamashita S."/>
            <person name="Takamatsu N."/>
            <person name="Sugiyama K."/>
            <person name="Hibi M."/>
            <person name="Nakabeppu Y."/>
            <person name="Shiba T."/>
            <person name="Yamamoto K."/>
        </authorList>
    </citation>
    <scope>NUCLEOTIDE SEQUENCE [MRNA]</scope>
    <scope>INTERACTION WITH MAPK8IP3</scope>
    <source>
        <tissue>Brain</tissue>
    </source>
</reference>
<reference key="2">
    <citation type="journal article" date="1997" name="Oncogene">
        <title>JNK1, JNK2 and JNK3 are p53 N-terminal serine 34 kinases.</title>
        <authorList>
            <person name="Hu M.C."/>
            <person name="Qiu W.R."/>
            <person name="Wang Y.P."/>
        </authorList>
    </citation>
    <scope>FUNCTION IN PHOSPHORYLATION OF TP53</scope>
    <scope>CATALYTIC ACTIVITY</scope>
</reference>
<reference key="3">
    <citation type="journal article" date="1997" name="Proc. Natl. Acad. Sci. U.S.A.">
        <title>Targeted disruption of the MKK4 gene causes embryonic death, inhibition of c-Jun NH2-terminal kinase activation, and defects in AP-1 transcriptional activity.</title>
        <authorList>
            <person name="Yang D."/>
            <person name="Tournier C."/>
            <person name="Wysk M."/>
            <person name="Lu H.-T."/>
            <person name="Xu J."/>
            <person name="Davis R.J."/>
            <person name="Flavell R.A."/>
        </authorList>
    </citation>
    <scope>CATALYTIC ACTIVITY</scope>
    <scope>REGULATION BY MAP2K4</scope>
    <source>
        <tissue>Embryonic stem cell</tissue>
    </source>
</reference>
<reference key="4">
    <citation type="journal article" date="1997" name="Proc. Natl. Acad. Sci. U.S.A.">
        <title>Mitogen-activated protein kinase kinase 7 is an activator of the c-Jun NH2-terminal kinase.</title>
        <authorList>
            <person name="Tournier C."/>
            <person name="Whitmarsh A.J."/>
            <person name="Cavanagh J."/>
            <person name="Barrett T."/>
            <person name="Davis R.J."/>
        </authorList>
    </citation>
    <scope>CATALYTIC ACTIVITY</scope>
    <scope>COFACTOR</scope>
    <scope>REGULATION BY MAP2K7</scope>
</reference>
<reference key="5">
    <citation type="journal article" date="2000" name="Nature">
        <title>JNK is required for effector T-cell function but not for T-cell activation.</title>
        <authorList>
            <person name="Dong C."/>
            <person name="Yang D.D."/>
            <person name="Tournier C."/>
            <person name="Whitmarsh A.J."/>
            <person name="Xu J."/>
            <person name="Davis R.J."/>
            <person name="Flavell R.A."/>
        </authorList>
    </citation>
    <scope>FUNCTION</scope>
    <scope>ACTIVITY REGULATION</scope>
    <scope>INDUCTION</scope>
    <source>
        <tissue>Embryonic stem cell</tissue>
        <tissue>T-cell</tissue>
    </source>
</reference>
<reference key="6">
    <citation type="journal article" date="2001" name="FEBS Lett.">
        <title>The AP-1 repressor, JDP2, is a bona fide substrate for the c-Jun N-terminal kinase.</title>
        <authorList>
            <person name="Katz S."/>
            <person name="Heinrich R."/>
            <person name="Aronheim A."/>
        </authorList>
    </citation>
    <scope>FUNCTION IN PHOSPHORYLATION OF JDP2</scope>
    <scope>CATALYTIC ACTIVITY</scope>
</reference>
<reference key="7">
    <citation type="journal article" date="2001" name="Genes Dev.">
        <title>Requirement of the JIP1 scaffold protein for stress-induced JNK activation.</title>
        <authorList>
            <person name="Whitmarsh A.J."/>
            <person name="Kuan C.-Y."/>
            <person name="Kennedy N.J."/>
            <person name="Kelkar N."/>
            <person name="Haydar T.F."/>
            <person name="Mordes J.P."/>
            <person name="Appel M."/>
            <person name="Rossini A.A."/>
            <person name="Jones S.N."/>
            <person name="Flavell R.A."/>
            <person name="Rakic P."/>
            <person name="Davis R.J."/>
        </authorList>
    </citation>
    <scope>CATALYTIC ACTIVITY</scope>
    <scope>SUBUNIT</scope>
    <scope>PHOSPHORYLATION AT THR-183 AND TYR-185</scope>
    <source>
        <tissue>Hippocampus</tissue>
    </source>
</reference>
<reference key="8">
    <citation type="journal article" date="2002" name="Proc. Natl. Acad. Sci. U.S.A.">
        <title>JLP: a scaffolding protein that tethers JNK/p38MAPK signaling modules and transcription factors.</title>
        <authorList>
            <person name="Lee C.M."/>
            <person name="Onesime D."/>
            <person name="Reddy C.D."/>
            <person name="Dhanasekaran N."/>
            <person name="Reddy E.P."/>
        </authorList>
    </citation>
    <scope>INTERACTION WITH SPAG9</scope>
</reference>
<reference key="9">
    <citation type="journal article" date="2003" name="Brain Res. Mol. Brain Res.">
        <title>Cytoplasmic retention sites in p190RhoGEF confer anti-apoptotic activity to an EGFP-tagged protein.</title>
        <authorList>
            <person name="Wu J."/>
            <person name="Zhai J."/>
            <person name="Lin H."/>
            <person name="Nie Z."/>
            <person name="Ge W.-W."/>
            <person name="Garcia-Bermejo L."/>
            <person name="Muschel R.J."/>
            <person name="Schlaepfer W.W."/>
            <person name="Canete-Soler R."/>
        </authorList>
    </citation>
    <scope>IDENTIFICATION IN A COMPLEX WITH MAPK8IP1 AND ARHGEF28</scope>
</reference>
<reference key="10">
    <citation type="journal article" date="2004" name="Mol. Cell. Proteomics">
        <title>Phosphoproteomic analysis of the developing mouse brain.</title>
        <authorList>
            <person name="Ballif B.A."/>
            <person name="Villen J."/>
            <person name="Beausoleil S.A."/>
            <person name="Schwartz D."/>
            <person name="Gygi S.P."/>
        </authorList>
    </citation>
    <scope>PHOSPHORYLATION [LARGE SCALE ANALYSIS] AT SER-377</scope>
    <scope>IDENTIFICATION BY MASS SPECTROMETRY [LARGE SCALE ANALYSIS]</scope>
    <source>
        <tissue>Embryonic brain</tissue>
    </source>
</reference>
<reference key="11">
    <citation type="journal article" date="2005" name="Mol. Cell. Biol.">
        <title>JAMP, a Jun N-terminal kinase 1 (JNK1)-associated membrane protein, regulates duration of JNK activity.</title>
        <authorList>
            <person name="Kadoya T."/>
            <person name="Khurana A."/>
            <person name="Tcherpakov M."/>
            <person name="Bromberg K.D."/>
            <person name="Didier C."/>
            <person name="Broday L."/>
            <person name="Asahara T."/>
            <person name="Bhoumik A."/>
            <person name="Ronai Z."/>
        </authorList>
    </citation>
    <scope>CATALYTIC ACTIVITY</scope>
    <scope>INTERACTION WITH JAMP</scope>
</reference>
<reference key="12">
    <citation type="journal article" date="2006" name="J. Cell Biol.">
        <title>JNK1 phosphorylation of SCG10 determines microtubule dynamics and axodendritic length.</title>
        <authorList>
            <person name="Tararuk T."/>
            <person name="Ostman N."/>
            <person name="Li W."/>
            <person name="Bjorkblom B."/>
            <person name="Padzik A."/>
            <person name="Zdrojewska J."/>
            <person name="Hongisto V."/>
            <person name="Herdegen T."/>
            <person name="Konopka W."/>
            <person name="Courtney M.J."/>
            <person name="Coffey E.T."/>
        </authorList>
    </citation>
    <scope>CATALYTIC ACTIVITY</scope>
    <scope>SUBCELLULAR LOCATION</scope>
    <scope>DEVELOPMENTAL STAGE</scope>
</reference>
<reference key="13">
    <citation type="journal article" date="2007" name="FEBS Lett.">
        <title>GRASP-1 is a neuronal scaffold protein for the JNK signaling pathway.</title>
        <authorList>
            <person name="Ye B."/>
            <person name="Yu W.P."/>
            <person name="Thomas G.M."/>
            <person name="Huganir R.L."/>
        </authorList>
    </citation>
    <scope>PHOSPHORYLATION BY MAP3K1</scope>
</reference>
<reference key="14">
    <citation type="journal article" date="2010" name="Cell">
        <title>A tissue-specific atlas of mouse protein phosphorylation and expression.</title>
        <authorList>
            <person name="Huttlin E.L."/>
            <person name="Jedrychowski M.P."/>
            <person name="Elias J.E."/>
            <person name="Goswami T."/>
            <person name="Rad R."/>
            <person name="Beausoleil S.A."/>
            <person name="Villen J."/>
            <person name="Haas W."/>
            <person name="Sowa M.E."/>
            <person name="Gygi S.P."/>
        </authorList>
    </citation>
    <scope>IDENTIFICATION BY MASS SPECTROMETRY [LARGE SCALE ANALYSIS]</scope>
    <source>
        <tissue>Heart</tissue>
        <tissue>Kidney</tissue>
        <tissue>Testis</tissue>
    </source>
</reference>
<reference key="15">
    <citation type="journal article" date="2010" name="Proc. Natl. Acad. Sci. U.S.A.">
        <title>JNK-mediated turnover and stabilization of the transcription factor p45/NF-E2 during differentiation of murine erythroleukemia cells.</title>
        <authorList>
            <person name="Lee T.L."/>
            <person name="Shyu Y.C."/>
            <person name="Hsu P.H."/>
            <person name="Chang C.W."/>
            <person name="Wen S.C."/>
            <person name="Hsiao W.Y."/>
            <person name="Tsai M.D."/>
            <person name="Shen C.K."/>
        </authorList>
    </citation>
    <scope>FUNCTION</scope>
    <scope>CATALYTIC ACTIVITY</scope>
    <scope>INTERACTION WITH NFE2</scope>
</reference>
<reference key="16">
    <citation type="journal article" date="2011" name="Nat. Neurosci.">
        <title>Phosphorylation of SCG10/stathmin-2 determines multipolar stage exit and neuronal migration rate.</title>
        <authorList>
            <person name="Westerlund N."/>
            <person name="Zdrojewska J."/>
            <person name="Padzik A."/>
            <person name="Komulainen E."/>
            <person name="Bjorkblom B."/>
            <person name="Rannikko E."/>
            <person name="Tararuk T."/>
            <person name="Garcia-Frigola C."/>
            <person name="Sandholm J."/>
            <person name="Nguyen L."/>
            <person name="Kallunki T."/>
            <person name="Courtney M.J."/>
            <person name="Coffey E.T."/>
        </authorList>
    </citation>
    <scope>FUNCTION</scope>
    <scope>CATALYTIC ACTIVITY</scope>
    <scope>DISRUPTION PHENOTYPE</scope>
</reference>
<reference key="17">
    <citation type="journal article" date="2012" name="EMBO Rep.">
        <title>JNK regulates the photic response of the mammalian circadian clock.</title>
        <authorList>
            <person name="Yoshitane H."/>
            <person name="Honma S."/>
            <person name="Imamura K."/>
            <person name="Nakajima H."/>
            <person name="Nishide S.Y."/>
            <person name="Ono D."/>
            <person name="Kiyota H."/>
            <person name="Shinozaki N."/>
            <person name="Matsuki H."/>
            <person name="Wada N."/>
            <person name="Doi H."/>
            <person name="Hamada T."/>
            <person name="Honma K."/>
            <person name="Fukada Y."/>
        </authorList>
    </citation>
    <scope>FUNCTION</scope>
    <scope>CATALYTIC ACTIVITY</scope>
    <scope>TISSUE SPECIFICITY</scope>
</reference>
<reference key="18">
    <citation type="journal article" date="2013" name="Eur. J. Immunol.">
        <title>The POSH/JIP-1 scaffold network regulates TCR-mediated JNK1 signals and effector function in CD8(+) T cells.</title>
        <authorList>
            <person name="Cunningham C.A."/>
            <person name="Knudson K.M."/>
            <person name="Peng B.J."/>
            <person name="Teixeiro E."/>
            <person name="Daniels M.A."/>
        </authorList>
    </citation>
    <scope>IDENTIFICATION IN A COMPLEX WITH SH3RF1; RAC1; MAP3K11; MAPK8IP1 AND MAP2K7</scope>
</reference>
<reference key="19">
    <citation type="journal article" date="2016" name="J. Immunol.">
        <title>POSH regulates CD4+ T cell differentiation and survival.</title>
        <authorList>
            <person name="Cunningham C.A."/>
            <person name="Cardwell L.N."/>
            <person name="Guan Y."/>
            <person name="Teixeiro E."/>
            <person name="Daniels M.A."/>
        </authorList>
    </citation>
    <scope>IDENTIFICATION IN A COMPLEX WITH SH3RF1; RAC2; MAP3K7; MAPK8IP1; MAP2K7 AND MAPK9</scope>
</reference>
<reference key="20">
    <citation type="journal article" date="2017" name="Mol. Cell">
        <title>NLRP3 phosphorylation is an essential priming event for inflammasome activation.</title>
        <authorList>
            <person name="Song N."/>
            <person name="Liu Z.S."/>
            <person name="Xue W."/>
            <person name="Bai Z.F."/>
            <person name="Wang Q.Y."/>
            <person name="Dai J."/>
            <person name="Liu X."/>
            <person name="Huang Y.J."/>
            <person name="Cai H."/>
            <person name="Zhan X.Y."/>
            <person name="Han Q.Y."/>
            <person name="Wang H."/>
            <person name="Chen Y."/>
            <person name="Li H.Y."/>
            <person name="Li A.L."/>
            <person name="Zhang X.M."/>
            <person name="Zhou T."/>
            <person name="Li T."/>
        </authorList>
    </citation>
    <scope>FUNCTION</scope>
    <scope>CATALYTIC ACTIVITY</scope>
</reference>
<reference key="21">
    <citation type="journal article" date="2017" name="Stem Cell Reports">
        <title>Serine 347 Phosphorylation by JNKs Negatively Regulates OCT4 Protein Stability in Mouse Embryonic Stem Cells.</title>
        <authorList>
            <person name="Bae K.B."/>
            <person name="Yu D.H."/>
            <person name="Lee K.Y."/>
            <person name="Yao K."/>
            <person name="Ryu J."/>
            <person name="Lim D.Y."/>
            <person name="Zykova T.A."/>
            <person name="Kim M.O."/>
            <person name="Bode A.M."/>
            <person name="Dong Z."/>
        </authorList>
    </citation>
    <scope>FUNCTION</scope>
    <scope>CATALYTIC ACTIVITY</scope>
    <scope>INTERACTION WITH POU5F1</scope>
    <scope>SUBCELLULAR LOCATION</scope>
</reference>
<reference key="22">
    <citation type="journal article" date="2023" name="Cell Metab.">
        <title>Exercise-activated hepatic autophagy via the FN1-alpha5beta1 integrin pathway drives metabolic benefits of exercise.</title>
        <authorList>
            <person name="Kuramoto K."/>
            <person name="Liang H."/>
            <person name="Hong J.H."/>
            <person name="He C."/>
        </authorList>
    </citation>
    <scope>FUNCTION</scope>
</reference>
<comment type="function">
    <text evidence="1 2 6 8 14 15 16 19 20 21 24">Serine/threonine-protein kinase involved in various processes such as cell proliferation, differentiation, migration, transformation and programmed cell death (PubMed:28943315, PubMed:9393873). Extracellular stimuli such as pro-inflammatory cytokines or physical stress stimulate the stress-activated protein kinase/c-Jun N-terminal kinase (SAP/JNK) signaling pathway. In this cascade, two dual specificity kinases MAP2K4/MKK4 and MAP2K7/MKK7 phosphorylate and activate MAPK8/JNK1. In turn, MAPK8/JNK1 phosphorylates a number of transcription factors, primarily components of AP-1 such as JUN, JDP2 and ATF2 and thus regulates AP-1 transcriptional activity (PubMed:11602244). Phosphorylates the replication licensing factor CDT1, inhibiting the interaction between CDT1 and the histone H4 acetylase HBO1 to replication origins. Loss of this interaction abrogates the acetylation required for replication initiation. Promotes stressed cell apoptosis by phosphorylating key regulatory factors including p53/TP53 and Yes-associates protein YAP1. In T-cells, MAPK8 and MAPK9 are required for polarized differentiation of T-helper cells into Th1 cells (PubMed:10811224). Contributes to the survival of erythroid cells by phosphorylating the antagonist of cell death BAD upon EPO stimulation (By similarity). Mediates starvation-induced BCL2 phosphorylation, BCL2 dissociation from BECN1, and thus activation of autophagy (PubMed:36812915). Phosphorylates STMN2 and hence regulates microtubule dynamics, controlling neurite elongation in cortical neurons (PubMed:21297631). In the developing brain, through its cytoplasmic activity on STMN2, negatively regulates the rate of exit from multipolar stage and of radial migration from the ventricular zone (PubMed:21297631). Phosphorylates several other substrates including heat shock factor protein 4 (HSF4), the deacetylase SIRT1, ELK1, or the E3 ligase ITCH. Phosphorylates the CLOCK-BMAL1 heterodimer and plays a role in the regulation of the circadian clock (PubMed:22441692). Phosphorylates the heat shock transcription factor HSF1, suppressing HSF1-induced transcriptional activity (By similarity). Phosphorylates POU5F1, which results in the inhibition of POU5F1's transcriptional activity and enhances its proteasomal degradation (PubMed:29153991). Phosphorylates JUND and this phosphorylation is inhibited in the presence of MEN1 (By similarity). In neurons, phosphorylates SYT4 which captures neuronal dense core vesicles at synapses (By similarity). Phosphorylates EIF4ENIF1/4-ET in response to oxidative stress, promoting P-body assembly (By similarity). Phosphorylates SIRT6 in response to oxidative stress, stimulating its mono-ADP-ribosyltransferase activity (By similarity). Phosphorylates NLRP3, promoting assembly of the NLRP3 inflammasome (PubMed:28943315). Phosphorylates ALKBH5 in response to reactive oxygen species (ROS), promoting ALKBH5 sumoylation and inactivation (By similarity).</text>
</comment>
<comment type="catalytic activity">
    <reaction evidence="7 8 11 12 14 15 16 19 20 22 23 24">
        <text>L-seryl-[protein] + ATP = O-phospho-L-seryl-[protein] + ADP + H(+)</text>
        <dbReference type="Rhea" id="RHEA:17989"/>
        <dbReference type="Rhea" id="RHEA-COMP:9863"/>
        <dbReference type="Rhea" id="RHEA-COMP:11604"/>
        <dbReference type="ChEBI" id="CHEBI:15378"/>
        <dbReference type="ChEBI" id="CHEBI:29999"/>
        <dbReference type="ChEBI" id="CHEBI:30616"/>
        <dbReference type="ChEBI" id="CHEBI:83421"/>
        <dbReference type="ChEBI" id="CHEBI:456216"/>
        <dbReference type="EC" id="2.7.11.24"/>
    </reaction>
</comment>
<comment type="catalytic activity">
    <reaction evidence="7 8 11 12 14 15 16 20 22 23 24">
        <text>L-threonyl-[protein] + ATP = O-phospho-L-threonyl-[protein] + ADP + H(+)</text>
        <dbReference type="Rhea" id="RHEA:46608"/>
        <dbReference type="Rhea" id="RHEA-COMP:11060"/>
        <dbReference type="Rhea" id="RHEA-COMP:11605"/>
        <dbReference type="ChEBI" id="CHEBI:15378"/>
        <dbReference type="ChEBI" id="CHEBI:30013"/>
        <dbReference type="ChEBI" id="CHEBI:30616"/>
        <dbReference type="ChEBI" id="CHEBI:61977"/>
        <dbReference type="ChEBI" id="CHEBI:456216"/>
        <dbReference type="EC" id="2.7.11.24"/>
    </reaction>
</comment>
<comment type="cofactor">
    <cofactor evidence="23">
        <name>Mg(2+)</name>
        <dbReference type="ChEBI" id="CHEBI:18420"/>
    </cofactor>
</comment>
<comment type="activity regulation">
    <text evidence="1 6">Inhibited by SERPINB3 (By similarity). Activated by threonine and tyrosine phosphorylation by either of two dual specificity kinases, MAP2K4 and MAP2K7. MAP2K4 shows a strong preference for Tyr-185 while MAP2K7 phosphorylates Tyr-183 preferentially. Inhibited by dual specificity phosphatases, such as DUSP1.</text>
</comment>
<comment type="subunit">
    <text evidence="1 2 5 7 9 10 11 14 17 18 20">Binds to at least four scaffolding proteins, MAPK8IP1/JIP-1, MAPK8IP2/JIP-2, MAPK8IP3/JIP-3/JSAP1 and SPAG9/MAPK8IP4/JIP-4 (PubMed:10523642, PubMed:11562351, PubMed:12391307). These proteins also bind other components of the JNK signaling pathway. Forms a complex with MAPK8IP1 and ARHGEF28 (PubMed:14499478). Interacts with TP53 and WWOX (By similarity). Interacts with JAMP (PubMed:16166642). Interacts with NFATC4 (By similarity). Interacts with MECOM; regulates JNK signaling (By similarity). Interacts with PIN1; this interaction mediates MAPK8 conformational changes leading to the binding of MAPK8 to its substrates (By similarity). Interacts with HSF1 (via D domain and preferentially with hyperphosphorylated form); this interaction occurs under both normal growth conditions and immediately upon heat shock (By similarity). Interacts (phosphorylated form) with NFE2; the interaction phosphorylates NFE2 in undifferentiated cells (PubMed:19966288). Interacts with GRIPAP1 (By similarity). Interacts with POU5F1; phosphorylates POU5F1 at 'Ser-347' (PubMed:29153991). Found in a complex with SH3RF1, RAC1, MAP3K11/MLK3, MAP2K7/MKK7 and MAPK8IP1/JIP1 (PubMed:23963642). Found in a complex with SH3RF1, RAC2, MAP3K7/TAK1, MAP2K7/MKK7, MAPK8IP1/JIP1 and MAPK9/JNK2 (PubMed:27084103).</text>
</comment>
<comment type="interaction">
    <interactant intactId="EBI-298784">
        <id>Q91Y86</id>
    </interactant>
    <interactant intactId="EBI-764369">
        <id>P05627</id>
        <label>Jun</label>
    </interactant>
    <organismsDiffer>false</organismsDiffer>
    <experiments>2</experiments>
</comment>
<comment type="subcellular location">
    <subcellularLocation>
        <location evidence="12">Cytoplasm</location>
    </subcellularLocation>
    <subcellularLocation>
        <location evidence="20">Nucleus</location>
    </subcellularLocation>
    <subcellularLocation>
        <location evidence="2">Synapse</location>
    </subcellularLocation>
    <text evidence="2 20">In the cortical neurons, predominantly cytoplasmic and associated with the Golgi apparatus and endosomal fraction. Increased neuronal activity increases phosphorylated form at synapses (By similarity). Colocalizes with POU5F1 in the nucleus (By similarity) (PubMed:29153991).</text>
</comment>
<comment type="tissue specificity">
    <text evidence="16">Brain (at protein level).</text>
</comment>
<comment type="developmental stage">
    <text evidence="12">At 15.5 dpc, mid to low expression throughout the midbrain, with more prominent levels in the telencephalon, especially in the intermediate zone, the midbrain roof, the olfactory epithelium, the inferior colliculus, and the medulla oblongata. telencephalon revealed concentrated (at protein level).</text>
</comment>
<comment type="induction">
    <text evidence="6">In T-cells, following T-cell receptor (TCR) activation. Levels peak 48 hours after TCR and CD-28 costimulation.</text>
</comment>
<comment type="domain">
    <text>The TXY motif contains the threonine and tyrosine residues whose phosphorylation activates the MAP kinases.</text>
</comment>
<comment type="PTM">
    <text evidence="1 2 7 13">Phosphorylated by TAOK2 (By similarity). Dually phosphorylated on Thr-183 and Tyr-185 by MAP2K7 and MAP2K4, which activates the enzyme (PubMed:11562351). May be phosphorylated at Thr-183 and Tyr-185 by MAP3K1/MEKK1 (PubMed:17761173). Phosphorylated form is more concentrated at synapses than none-phosphorylated (By similarity).</text>
</comment>
<comment type="disruption phenotype">
    <text evidence="15">At 14.5 dpc, brain intermediate zone and cortical plate are significantly thicker in mutant mice compared to wild type. The number of neuronal cells is increased in the cortical plate and intermediate zone. Cell cycle exit is decreased by 13% in the ventricular and subventricular zones. In 17.5 dpc brains, the ventricular zone was thinner in mutant mice compared to wild type animals, consistent with the increased number of neurons in the cortical plate. TUBB3 is consistently more diffuse and less structured in mutant telencephalon than in wild type.</text>
</comment>
<comment type="similarity">
    <text evidence="26">Belongs to the protein kinase superfamily. CMGC Ser/Thr protein kinase family. MAP kinase subfamily.</text>
</comment>
<organism>
    <name type="scientific">Mus musculus</name>
    <name type="common">Mouse</name>
    <dbReference type="NCBI Taxonomy" id="10090"/>
    <lineage>
        <taxon>Eukaryota</taxon>
        <taxon>Metazoa</taxon>
        <taxon>Chordata</taxon>
        <taxon>Craniata</taxon>
        <taxon>Vertebrata</taxon>
        <taxon>Euteleostomi</taxon>
        <taxon>Mammalia</taxon>
        <taxon>Eutheria</taxon>
        <taxon>Euarchontoglires</taxon>
        <taxon>Glires</taxon>
        <taxon>Rodentia</taxon>
        <taxon>Myomorpha</taxon>
        <taxon>Muroidea</taxon>
        <taxon>Muridae</taxon>
        <taxon>Murinae</taxon>
        <taxon>Mus</taxon>
        <taxon>Mus</taxon>
    </lineage>
</organism>
<evidence type="ECO:0000250" key="1">
    <source>
        <dbReference type="UniProtKB" id="P45983"/>
    </source>
</evidence>
<evidence type="ECO:0000250" key="2">
    <source>
        <dbReference type="UniProtKB" id="P49185"/>
    </source>
</evidence>
<evidence type="ECO:0000255" key="3">
    <source>
        <dbReference type="PROSITE-ProRule" id="PRU00159"/>
    </source>
</evidence>
<evidence type="ECO:0000255" key="4">
    <source>
        <dbReference type="PROSITE-ProRule" id="PRU10027"/>
    </source>
</evidence>
<evidence type="ECO:0000269" key="5">
    <source>
    </source>
</evidence>
<evidence type="ECO:0000269" key="6">
    <source>
    </source>
</evidence>
<evidence type="ECO:0000269" key="7">
    <source>
    </source>
</evidence>
<evidence type="ECO:0000269" key="8">
    <source>
    </source>
</evidence>
<evidence type="ECO:0000269" key="9">
    <source>
    </source>
</evidence>
<evidence type="ECO:0000269" key="10">
    <source>
    </source>
</evidence>
<evidence type="ECO:0000269" key="11">
    <source>
    </source>
</evidence>
<evidence type="ECO:0000269" key="12">
    <source>
    </source>
</evidence>
<evidence type="ECO:0000269" key="13">
    <source>
    </source>
</evidence>
<evidence type="ECO:0000269" key="14">
    <source>
    </source>
</evidence>
<evidence type="ECO:0000269" key="15">
    <source>
    </source>
</evidence>
<evidence type="ECO:0000269" key="16">
    <source>
    </source>
</evidence>
<evidence type="ECO:0000269" key="17">
    <source>
    </source>
</evidence>
<evidence type="ECO:0000269" key="18">
    <source>
    </source>
</evidence>
<evidence type="ECO:0000269" key="19">
    <source>
    </source>
</evidence>
<evidence type="ECO:0000269" key="20">
    <source>
    </source>
</evidence>
<evidence type="ECO:0000269" key="21">
    <source>
    </source>
</evidence>
<evidence type="ECO:0000269" key="22">
    <source>
    </source>
</evidence>
<evidence type="ECO:0000269" key="23">
    <source>
    </source>
</evidence>
<evidence type="ECO:0000269" key="24">
    <source>
    </source>
</evidence>
<evidence type="ECO:0000303" key="25">
    <source>
    </source>
</evidence>
<evidence type="ECO:0000305" key="26"/>
<evidence type="ECO:0007744" key="27">
    <source>
    </source>
</evidence>
<keyword id="KW-0067">ATP-binding</keyword>
<keyword id="KW-0090">Biological rhythms</keyword>
<keyword id="KW-0963">Cytoplasm</keyword>
<keyword id="KW-0418">Kinase</keyword>
<keyword id="KW-0547">Nucleotide-binding</keyword>
<keyword id="KW-0539">Nucleus</keyword>
<keyword id="KW-0597">Phosphoprotein</keyword>
<keyword id="KW-1185">Reference proteome</keyword>
<keyword id="KW-0702">S-nitrosylation</keyword>
<keyword id="KW-0723">Serine/threonine-protein kinase</keyword>
<keyword id="KW-0770">Synapse</keyword>
<keyword id="KW-0808">Transferase</keyword>
<feature type="chain" id="PRO_0000186263" description="Mitogen-activated protein kinase 8">
    <location>
        <begin position="1"/>
        <end position="384"/>
    </location>
</feature>
<feature type="domain" description="Protein kinase" evidence="3">
    <location>
        <begin position="26"/>
        <end position="321"/>
    </location>
</feature>
<feature type="short sequence motif" description="TXY">
    <location>
        <begin position="183"/>
        <end position="185"/>
    </location>
</feature>
<feature type="active site" description="Proton acceptor" evidence="3 4">
    <location>
        <position position="151"/>
    </location>
</feature>
<feature type="binding site" evidence="3">
    <location>
        <begin position="32"/>
        <end position="40"/>
    </location>
    <ligand>
        <name>ATP</name>
        <dbReference type="ChEBI" id="CHEBI:30616"/>
    </ligand>
</feature>
<feature type="binding site" evidence="3">
    <location>
        <position position="55"/>
    </location>
    <ligand>
        <name>ATP</name>
        <dbReference type="ChEBI" id="CHEBI:30616"/>
    </ligand>
</feature>
<feature type="modified residue" description="S-nitrosocysteine" evidence="2">
    <location>
        <position position="116"/>
    </location>
</feature>
<feature type="modified residue" description="Phosphothreonine; by MAP2K7" evidence="7">
    <location>
        <position position="183"/>
    </location>
</feature>
<feature type="modified residue" description="Phosphotyrosine; by MAP2K4" evidence="7">
    <location>
        <position position="185"/>
    </location>
</feature>
<feature type="modified residue" description="Phosphoserine" evidence="27">
    <location>
        <position position="377"/>
    </location>
</feature>
<sequence>MSRSKRDNNFYSVEIGDSTFTVLKRYQNLKPIGSGAQGIVCAAYDAILERNVAIKKLSRPFQNQTHAKRAYRELVLMKCVNHKNIIGLLNVFTPQKSLEEFQDVYIVMELMDANLCQVIQMELDHERMSYLLYQMLCGIKHLHSAGIIHRDLKPSNIVVKSDCTLKILDFGLARTAGTSFMMTPYVVTRYYRAPEVILGMGYKENVDLWSVGCIMGEMVCHKILFPGRDYIDQWNKVIEQLGTPCPEFMKKLQPTVRTYVENRPKYAGYSFEKLFPDVLFPADSEHNKLKASQARDLLSKMLVIDASKRISVDEALQHPYINVWYDPSEAEAPPPKIPDKQLDEREHTIEEWKELIYKEVMDLEERTKNGVIRGQPSPLAQVQQ</sequence>
<name>MK08_MOUSE</name>
<protein>
    <recommendedName>
        <fullName>Mitogen-activated protein kinase 8</fullName>
        <shortName>MAP kinase 8</shortName>
        <shortName>MAPK 8</shortName>
        <ecNumber evidence="7 8 11 12 22 23 24">2.7.11.24</ecNumber>
    </recommendedName>
    <alternativeName>
        <fullName>Stress-activated protein kinase JNK1</fullName>
    </alternativeName>
    <alternativeName>
        <fullName>c-Jun N-terminal kinase 1</fullName>
    </alternativeName>
</protein>